<name>RL1_LISIN</name>
<proteinExistence type="inferred from homology"/>
<sequence length="229" mass="24546">MAKKGKKYQDALKQIDANKVYTAEEAVELAKKIDFAKFDATVEVAFRLGVDPKKADQQIRGAVVLPNGTGKTQRVLVFAKGEKAKEAEAAGADYVGESEFVEKINQGWFEFDVIVATPDMMGEVGKLGRVLGPKGLMPNPKTGTVTMDVTKAVNEIKAGKVEYRVDKAGNVHAAIGKVSFDAAKLVENFRTVNDVLQKAKPAAAKGTYVKNLSVTTTFGPGIKVDPASL</sequence>
<protein>
    <recommendedName>
        <fullName evidence="1">Large ribosomal subunit protein uL1</fullName>
    </recommendedName>
    <alternativeName>
        <fullName evidence="2">50S ribosomal protein L1</fullName>
    </alternativeName>
</protein>
<gene>
    <name evidence="1" type="primary">rplA</name>
    <name type="ordered locus">lin0281</name>
</gene>
<reference key="1">
    <citation type="journal article" date="2001" name="Science">
        <title>Comparative genomics of Listeria species.</title>
        <authorList>
            <person name="Glaser P."/>
            <person name="Frangeul L."/>
            <person name="Buchrieser C."/>
            <person name="Rusniok C."/>
            <person name="Amend A."/>
            <person name="Baquero F."/>
            <person name="Berche P."/>
            <person name="Bloecker H."/>
            <person name="Brandt P."/>
            <person name="Chakraborty T."/>
            <person name="Charbit A."/>
            <person name="Chetouani F."/>
            <person name="Couve E."/>
            <person name="de Daruvar A."/>
            <person name="Dehoux P."/>
            <person name="Domann E."/>
            <person name="Dominguez-Bernal G."/>
            <person name="Duchaud E."/>
            <person name="Durant L."/>
            <person name="Dussurget O."/>
            <person name="Entian K.-D."/>
            <person name="Fsihi H."/>
            <person name="Garcia-del Portillo F."/>
            <person name="Garrido P."/>
            <person name="Gautier L."/>
            <person name="Goebel W."/>
            <person name="Gomez-Lopez N."/>
            <person name="Hain T."/>
            <person name="Hauf J."/>
            <person name="Jackson D."/>
            <person name="Jones L.-M."/>
            <person name="Kaerst U."/>
            <person name="Kreft J."/>
            <person name="Kuhn M."/>
            <person name="Kunst F."/>
            <person name="Kurapkat G."/>
            <person name="Madueno E."/>
            <person name="Maitournam A."/>
            <person name="Mata Vicente J."/>
            <person name="Ng E."/>
            <person name="Nedjari H."/>
            <person name="Nordsiek G."/>
            <person name="Novella S."/>
            <person name="de Pablos B."/>
            <person name="Perez-Diaz J.-C."/>
            <person name="Purcell R."/>
            <person name="Remmel B."/>
            <person name="Rose M."/>
            <person name="Schlueter T."/>
            <person name="Simoes N."/>
            <person name="Tierrez A."/>
            <person name="Vazquez-Boland J.-A."/>
            <person name="Voss H."/>
            <person name="Wehland J."/>
            <person name="Cossart P."/>
        </authorList>
    </citation>
    <scope>NUCLEOTIDE SEQUENCE [LARGE SCALE GENOMIC DNA]</scope>
    <source>
        <strain>ATCC BAA-680 / CLIP 11262</strain>
    </source>
</reference>
<dbReference type="EMBL" id="AL596164">
    <property type="protein sequence ID" value="CAC95514.1"/>
    <property type="molecule type" value="Genomic_DNA"/>
</dbReference>
<dbReference type="PIR" id="AB1468">
    <property type="entry name" value="AB1468"/>
</dbReference>
<dbReference type="RefSeq" id="WP_003726838.1">
    <property type="nucleotide sequence ID" value="NC_003212.1"/>
</dbReference>
<dbReference type="SMR" id="Q92F26"/>
<dbReference type="STRING" id="272626.gene:17564608"/>
<dbReference type="GeneID" id="93233731"/>
<dbReference type="KEGG" id="lin:rplA"/>
<dbReference type="eggNOG" id="COG0081">
    <property type="taxonomic scope" value="Bacteria"/>
</dbReference>
<dbReference type="HOGENOM" id="CLU_062853_0_0_9"/>
<dbReference type="OrthoDB" id="9803740at2"/>
<dbReference type="Proteomes" id="UP000002513">
    <property type="component" value="Chromosome"/>
</dbReference>
<dbReference type="GO" id="GO:0015934">
    <property type="term" value="C:large ribosomal subunit"/>
    <property type="evidence" value="ECO:0007669"/>
    <property type="project" value="InterPro"/>
</dbReference>
<dbReference type="GO" id="GO:0019843">
    <property type="term" value="F:rRNA binding"/>
    <property type="evidence" value="ECO:0007669"/>
    <property type="project" value="UniProtKB-UniRule"/>
</dbReference>
<dbReference type="GO" id="GO:0003735">
    <property type="term" value="F:structural constituent of ribosome"/>
    <property type="evidence" value="ECO:0007669"/>
    <property type="project" value="InterPro"/>
</dbReference>
<dbReference type="GO" id="GO:0000049">
    <property type="term" value="F:tRNA binding"/>
    <property type="evidence" value="ECO:0007669"/>
    <property type="project" value="UniProtKB-KW"/>
</dbReference>
<dbReference type="GO" id="GO:0006417">
    <property type="term" value="P:regulation of translation"/>
    <property type="evidence" value="ECO:0007669"/>
    <property type="project" value="UniProtKB-KW"/>
</dbReference>
<dbReference type="GO" id="GO:0006412">
    <property type="term" value="P:translation"/>
    <property type="evidence" value="ECO:0007669"/>
    <property type="project" value="UniProtKB-UniRule"/>
</dbReference>
<dbReference type="CDD" id="cd00403">
    <property type="entry name" value="Ribosomal_L1"/>
    <property type="match status" value="1"/>
</dbReference>
<dbReference type="FunFam" id="3.40.50.790:FF:000001">
    <property type="entry name" value="50S ribosomal protein L1"/>
    <property type="match status" value="1"/>
</dbReference>
<dbReference type="Gene3D" id="3.30.190.20">
    <property type="match status" value="1"/>
</dbReference>
<dbReference type="Gene3D" id="3.40.50.790">
    <property type="match status" value="1"/>
</dbReference>
<dbReference type="HAMAP" id="MF_01318_B">
    <property type="entry name" value="Ribosomal_uL1_B"/>
    <property type="match status" value="1"/>
</dbReference>
<dbReference type="InterPro" id="IPR005878">
    <property type="entry name" value="Ribosom_uL1_bac-type"/>
</dbReference>
<dbReference type="InterPro" id="IPR002143">
    <property type="entry name" value="Ribosomal_uL1"/>
</dbReference>
<dbReference type="InterPro" id="IPR023674">
    <property type="entry name" value="Ribosomal_uL1-like"/>
</dbReference>
<dbReference type="InterPro" id="IPR028364">
    <property type="entry name" value="Ribosomal_uL1/biogenesis"/>
</dbReference>
<dbReference type="InterPro" id="IPR016095">
    <property type="entry name" value="Ribosomal_uL1_3-a/b-sand"/>
</dbReference>
<dbReference type="InterPro" id="IPR023673">
    <property type="entry name" value="Ribosomal_uL1_CS"/>
</dbReference>
<dbReference type="NCBIfam" id="TIGR01169">
    <property type="entry name" value="rplA_bact"/>
    <property type="match status" value="1"/>
</dbReference>
<dbReference type="PANTHER" id="PTHR36427">
    <property type="entry name" value="54S RIBOSOMAL PROTEIN L1, MITOCHONDRIAL"/>
    <property type="match status" value="1"/>
</dbReference>
<dbReference type="PANTHER" id="PTHR36427:SF3">
    <property type="entry name" value="LARGE RIBOSOMAL SUBUNIT PROTEIN UL1M"/>
    <property type="match status" value="1"/>
</dbReference>
<dbReference type="Pfam" id="PF00687">
    <property type="entry name" value="Ribosomal_L1"/>
    <property type="match status" value="1"/>
</dbReference>
<dbReference type="PIRSF" id="PIRSF002155">
    <property type="entry name" value="Ribosomal_L1"/>
    <property type="match status" value="1"/>
</dbReference>
<dbReference type="SUPFAM" id="SSF56808">
    <property type="entry name" value="Ribosomal protein L1"/>
    <property type="match status" value="1"/>
</dbReference>
<dbReference type="PROSITE" id="PS01199">
    <property type="entry name" value="RIBOSOMAL_L1"/>
    <property type="match status" value="1"/>
</dbReference>
<feature type="chain" id="PRO_0000125680" description="Large ribosomal subunit protein uL1">
    <location>
        <begin position="1"/>
        <end position="229"/>
    </location>
</feature>
<accession>Q92F26</accession>
<keyword id="KW-0678">Repressor</keyword>
<keyword id="KW-0687">Ribonucleoprotein</keyword>
<keyword id="KW-0689">Ribosomal protein</keyword>
<keyword id="KW-0694">RNA-binding</keyword>
<keyword id="KW-0699">rRNA-binding</keyword>
<keyword id="KW-0810">Translation regulation</keyword>
<keyword id="KW-0820">tRNA-binding</keyword>
<evidence type="ECO:0000255" key="1">
    <source>
        <dbReference type="HAMAP-Rule" id="MF_01318"/>
    </source>
</evidence>
<evidence type="ECO:0000305" key="2"/>
<organism>
    <name type="scientific">Listeria innocua serovar 6a (strain ATCC BAA-680 / CLIP 11262)</name>
    <dbReference type="NCBI Taxonomy" id="272626"/>
    <lineage>
        <taxon>Bacteria</taxon>
        <taxon>Bacillati</taxon>
        <taxon>Bacillota</taxon>
        <taxon>Bacilli</taxon>
        <taxon>Bacillales</taxon>
        <taxon>Listeriaceae</taxon>
        <taxon>Listeria</taxon>
    </lineage>
</organism>
<comment type="function">
    <text evidence="1">Binds directly to 23S rRNA. The L1 stalk is quite mobile in the ribosome, and is involved in E site tRNA release.</text>
</comment>
<comment type="function">
    <text evidence="1">Protein L1 is also a translational repressor protein, it controls the translation of the L11 operon by binding to its mRNA.</text>
</comment>
<comment type="subunit">
    <text evidence="1">Part of the 50S ribosomal subunit.</text>
</comment>
<comment type="similarity">
    <text evidence="1">Belongs to the universal ribosomal protein uL1 family.</text>
</comment>